<organism>
    <name type="scientific">Shouchella clausii (strain KSM-K16)</name>
    <name type="common">Alkalihalobacillus clausii</name>
    <dbReference type="NCBI Taxonomy" id="66692"/>
    <lineage>
        <taxon>Bacteria</taxon>
        <taxon>Bacillati</taxon>
        <taxon>Bacillota</taxon>
        <taxon>Bacilli</taxon>
        <taxon>Bacillales</taxon>
        <taxon>Bacillaceae</taxon>
        <taxon>Shouchella</taxon>
    </lineage>
</organism>
<protein>
    <recommendedName>
        <fullName evidence="1">5-dehydro-2-deoxygluconokinase</fullName>
        <ecNumber evidence="1">2.7.1.92</ecNumber>
    </recommendedName>
    <alternativeName>
        <fullName evidence="1">2-deoxy-5-keto-D-gluconate kinase</fullName>
        <shortName evidence="1">DKG kinase</shortName>
    </alternativeName>
</protein>
<gene>
    <name evidence="1" type="primary">iolC</name>
    <name type="ordered locus">ABC0424</name>
</gene>
<comment type="function">
    <text evidence="1">Catalyzes the phosphorylation of 5-dehydro-2-deoxy-D-gluconate (2-deoxy-5-keto-D-gluconate or DKG) to 6-phospho-5-dehydro-2-deoxy-D-gluconate (DKGP).</text>
</comment>
<comment type="catalytic activity">
    <reaction evidence="1">
        <text>5-dehydro-2-deoxy-D-gluconate + ATP = 6-phospho-5-dehydro-2-deoxy-D-gluconate + ADP + H(+)</text>
        <dbReference type="Rhea" id="RHEA:13497"/>
        <dbReference type="ChEBI" id="CHEBI:15378"/>
        <dbReference type="ChEBI" id="CHEBI:16669"/>
        <dbReference type="ChEBI" id="CHEBI:30616"/>
        <dbReference type="ChEBI" id="CHEBI:57949"/>
        <dbReference type="ChEBI" id="CHEBI:456216"/>
        <dbReference type="EC" id="2.7.1.92"/>
    </reaction>
</comment>
<comment type="pathway">
    <text evidence="1">Polyol metabolism; myo-inositol degradation into acetyl-CoA; acetyl-CoA from myo-inositol: step 5/7.</text>
</comment>
<comment type="similarity">
    <text evidence="1">Belongs to the carbohydrate kinase PfkB family.</text>
</comment>
<sequence length="326" mass="35352">MGIQFQEGKQFDVIALGRACIDLNAAEYNRPMEETRSFTKYVGGSPANIAIGSAKLGLKVGFVGKIPDDQHGRFISSYMREAGVDTSQLVIDREGHKAGLTFTEILSPEECSILMYREKAADLYLSPDEIDAGYVRSAKVLLISGTALAQSPSREAALKAVSLAKAAGTKVVFELDYRPYTWSSREETSVYYTLLAGMAHIVIGTREEYDIMEGASASGNEQTAKMLFAKEPELVVIKHGVDGSYAYLPSGETFRAGVYKTNVLKTFGAGDSYASAFLYGLLRGYDIDQALRFGSASASIVVSKHSSSEAMPTLSEIKALVEEQHV</sequence>
<accession>Q5WKY9</accession>
<evidence type="ECO:0000255" key="1">
    <source>
        <dbReference type="HAMAP-Rule" id="MF_01668"/>
    </source>
</evidence>
<feature type="chain" id="PRO_0000352288" description="5-dehydro-2-deoxygluconokinase">
    <location>
        <begin position="1"/>
        <end position="326"/>
    </location>
</feature>
<reference key="1">
    <citation type="submission" date="2003-10" db="EMBL/GenBank/DDBJ databases">
        <title>The complete genome sequence of the alkaliphilic Bacillus clausii KSM-K16.</title>
        <authorList>
            <person name="Takaki Y."/>
            <person name="Kageyama Y."/>
            <person name="Shimamura S."/>
            <person name="Suzuki H."/>
            <person name="Nishi S."/>
            <person name="Hatada Y."/>
            <person name="Kawai S."/>
            <person name="Ito S."/>
            <person name="Horikoshi K."/>
        </authorList>
    </citation>
    <scope>NUCLEOTIDE SEQUENCE [LARGE SCALE GENOMIC DNA]</scope>
    <source>
        <strain>KSM-K16</strain>
    </source>
</reference>
<dbReference type="EC" id="2.7.1.92" evidence="1"/>
<dbReference type="EMBL" id="AP006627">
    <property type="protein sequence ID" value="BAD62966.1"/>
    <property type="molecule type" value="Genomic_DNA"/>
</dbReference>
<dbReference type="RefSeq" id="WP_011245285.1">
    <property type="nucleotide sequence ID" value="NC_006582.1"/>
</dbReference>
<dbReference type="SMR" id="Q5WKY9"/>
<dbReference type="STRING" id="66692.ABC0424"/>
<dbReference type="GeneID" id="86924477"/>
<dbReference type="KEGG" id="bcl:ABC0424"/>
<dbReference type="eggNOG" id="COG0524">
    <property type="taxonomic scope" value="Bacteria"/>
</dbReference>
<dbReference type="HOGENOM" id="CLU_027634_6_0_9"/>
<dbReference type="OrthoDB" id="9813569at2"/>
<dbReference type="UniPathway" id="UPA00076">
    <property type="reaction ID" value="UER00146"/>
</dbReference>
<dbReference type="Proteomes" id="UP000001168">
    <property type="component" value="Chromosome"/>
</dbReference>
<dbReference type="GO" id="GO:0047590">
    <property type="term" value="F:5-dehydro-2-deoxygluconokinase activity"/>
    <property type="evidence" value="ECO:0007669"/>
    <property type="project" value="UniProtKB-UniRule"/>
</dbReference>
<dbReference type="GO" id="GO:0005524">
    <property type="term" value="F:ATP binding"/>
    <property type="evidence" value="ECO:0007669"/>
    <property type="project" value="UniProtKB-UniRule"/>
</dbReference>
<dbReference type="GO" id="GO:0019310">
    <property type="term" value="P:inositol catabolic process"/>
    <property type="evidence" value="ECO:0007669"/>
    <property type="project" value="UniProtKB-UniRule"/>
</dbReference>
<dbReference type="CDD" id="cd01166">
    <property type="entry name" value="KdgK"/>
    <property type="match status" value="1"/>
</dbReference>
<dbReference type="Gene3D" id="3.40.1190.20">
    <property type="match status" value="1"/>
</dbReference>
<dbReference type="Gene3D" id="2.20.150.10">
    <property type="entry name" value="putative 5-dehydro-2- deoxygluconokinase"/>
    <property type="match status" value="1"/>
</dbReference>
<dbReference type="HAMAP" id="MF_01668">
    <property type="entry name" value="IolC"/>
    <property type="match status" value="1"/>
</dbReference>
<dbReference type="InterPro" id="IPR002173">
    <property type="entry name" value="Carboh/pur_kinase_PfkB_CS"/>
</dbReference>
<dbReference type="InterPro" id="IPR022841">
    <property type="entry name" value="DKG_kinase_firmi"/>
</dbReference>
<dbReference type="InterPro" id="IPR030830">
    <property type="entry name" value="Myo_inos_IolC"/>
</dbReference>
<dbReference type="InterPro" id="IPR023314">
    <property type="entry name" value="Myo_inos_IolC-like_sf"/>
</dbReference>
<dbReference type="InterPro" id="IPR050306">
    <property type="entry name" value="PfkB_Carbo_kinase"/>
</dbReference>
<dbReference type="InterPro" id="IPR011611">
    <property type="entry name" value="PfkB_dom"/>
</dbReference>
<dbReference type="InterPro" id="IPR029056">
    <property type="entry name" value="Ribokinase-like"/>
</dbReference>
<dbReference type="NCBIfam" id="TIGR04382">
    <property type="entry name" value="myo_inos_iolC_N"/>
    <property type="match status" value="1"/>
</dbReference>
<dbReference type="PANTHER" id="PTHR43085:SF49">
    <property type="entry name" value="5-DEHYDRO-2-DEOXYGLUCONOKINASE"/>
    <property type="match status" value="1"/>
</dbReference>
<dbReference type="PANTHER" id="PTHR43085">
    <property type="entry name" value="HEXOKINASE FAMILY MEMBER"/>
    <property type="match status" value="1"/>
</dbReference>
<dbReference type="Pfam" id="PF00294">
    <property type="entry name" value="PfkB"/>
    <property type="match status" value="1"/>
</dbReference>
<dbReference type="SUPFAM" id="SSF53613">
    <property type="entry name" value="Ribokinase-like"/>
    <property type="match status" value="1"/>
</dbReference>
<dbReference type="PROSITE" id="PS00584">
    <property type="entry name" value="PFKB_KINASES_2"/>
    <property type="match status" value="1"/>
</dbReference>
<keyword id="KW-0067">ATP-binding</keyword>
<keyword id="KW-0418">Kinase</keyword>
<keyword id="KW-0547">Nucleotide-binding</keyword>
<keyword id="KW-1185">Reference proteome</keyword>
<keyword id="KW-0808">Transferase</keyword>
<name>IOLC_SHOC1</name>
<proteinExistence type="inferred from homology"/>